<accession>Q9P7Y9</accession>
<accession>Q9Y7F5</accession>
<dbReference type="EMBL" id="AF155208">
    <property type="protein sequence ID" value="AAD37449.1"/>
    <property type="status" value="ALT_INIT"/>
    <property type="molecule type" value="Genomic_DNA"/>
</dbReference>
<dbReference type="EMBL" id="CU329670">
    <property type="protein sequence ID" value="CAB66311.1"/>
    <property type="molecule type" value="Genomic_DNA"/>
</dbReference>
<dbReference type="PIR" id="T50302">
    <property type="entry name" value="T50302"/>
</dbReference>
<dbReference type="RefSeq" id="NP_594703.1">
    <property type="nucleotide sequence ID" value="NM_001020130.2"/>
</dbReference>
<dbReference type="PDB" id="2RUJ">
    <property type="method" value="NMR"/>
    <property type="chains" value="A=247-400"/>
</dbReference>
<dbReference type="PDB" id="2RVK">
    <property type="method" value="NMR"/>
    <property type="chains" value="A=247-400"/>
</dbReference>
<dbReference type="PDBsum" id="2RUJ"/>
<dbReference type="PDBsum" id="2RVK"/>
<dbReference type="BMRB" id="Q9P7Y9"/>
<dbReference type="SMR" id="Q9P7Y9"/>
<dbReference type="BioGRID" id="279411">
    <property type="interactions" value="13"/>
</dbReference>
<dbReference type="FunCoup" id="Q9P7Y9">
    <property type="interactions" value="17"/>
</dbReference>
<dbReference type="IntAct" id="Q9P7Y9">
    <property type="interactions" value="2"/>
</dbReference>
<dbReference type="STRING" id="284812.Q9P7Y9"/>
<dbReference type="iPTMnet" id="Q9P7Y9"/>
<dbReference type="PaxDb" id="4896-SPAPYUG7.02c.1"/>
<dbReference type="EnsemblFungi" id="SPAPYUG7.02c.1">
    <property type="protein sequence ID" value="SPAPYUG7.02c.1:pep"/>
    <property type="gene ID" value="SPAPYUG7.02c"/>
</dbReference>
<dbReference type="GeneID" id="2542972"/>
<dbReference type="KEGG" id="spo:2542972"/>
<dbReference type="PomBase" id="SPAPYUG7.02c">
    <property type="gene designation" value="sin1"/>
</dbReference>
<dbReference type="VEuPathDB" id="FungiDB:SPAPYUG7.02c"/>
<dbReference type="eggNOG" id="KOG3739">
    <property type="taxonomic scope" value="Eukaryota"/>
</dbReference>
<dbReference type="HOGENOM" id="CLU_431582_0_0_1"/>
<dbReference type="InParanoid" id="Q9P7Y9"/>
<dbReference type="OMA" id="LWRSPIK"/>
<dbReference type="PhylomeDB" id="Q9P7Y9"/>
<dbReference type="Reactome" id="R-SPO-1257604">
    <property type="pathway name" value="PIP3 activates AKT signaling"/>
</dbReference>
<dbReference type="Reactome" id="R-SPO-389357">
    <property type="pathway name" value="CD28 dependent PI3K/Akt signaling"/>
</dbReference>
<dbReference type="Reactome" id="R-SPO-5218920">
    <property type="pathway name" value="VEGFR2 mediated vascular permeability"/>
</dbReference>
<dbReference type="Reactome" id="R-SPO-6804757">
    <property type="pathway name" value="Regulation of TP53 Degradation"/>
</dbReference>
<dbReference type="Reactome" id="R-SPO-9856530">
    <property type="pathway name" value="High laminar flow shear stress activates signaling by PIEZO1 and PECAM1:CDH5:KDR in endothelial cells"/>
</dbReference>
<dbReference type="EvolutionaryTrace" id="Q9P7Y9"/>
<dbReference type="PRO" id="PR:Q9P7Y9"/>
<dbReference type="Proteomes" id="UP000002485">
    <property type="component" value="Chromosome I"/>
</dbReference>
<dbReference type="GO" id="GO:0005737">
    <property type="term" value="C:cytoplasm"/>
    <property type="evidence" value="ECO:0000318"/>
    <property type="project" value="GO_Central"/>
</dbReference>
<dbReference type="GO" id="GO:0005829">
    <property type="term" value="C:cytosol"/>
    <property type="evidence" value="ECO:0007005"/>
    <property type="project" value="PomBase"/>
</dbReference>
<dbReference type="GO" id="GO:0005886">
    <property type="term" value="C:plasma membrane"/>
    <property type="evidence" value="ECO:0000318"/>
    <property type="project" value="GO_Central"/>
</dbReference>
<dbReference type="GO" id="GO:0031932">
    <property type="term" value="C:TORC2 complex"/>
    <property type="evidence" value="ECO:0000314"/>
    <property type="project" value="PomBase"/>
</dbReference>
<dbReference type="GO" id="GO:0140767">
    <property type="term" value="F:enzyme-substrate adaptor activity"/>
    <property type="evidence" value="ECO:0000314"/>
    <property type="project" value="PomBase"/>
</dbReference>
<dbReference type="GO" id="GO:0005546">
    <property type="term" value="F:phosphatidylinositol-4,5-bisphosphate binding"/>
    <property type="evidence" value="ECO:0000318"/>
    <property type="project" value="GO_Central"/>
</dbReference>
<dbReference type="GO" id="GO:0051321">
    <property type="term" value="P:meiotic cell cycle"/>
    <property type="evidence" value="ECO:0007669"/>
    <property type="project" value="UniProtKB-KW"/>
</dbReference>
<dbReference type="GO" id="GO:0038066">
    <property type="term" value="P:p38MAPK cascade"/>
    <property type="evidence" value="ECO:0000315"/>
    <property type="project" value="PomBase"/>
</dbReference>
<dbReference type="GO" id="GO:0031139">
    <property type="term" value="P:positive regulation of conjugation with cellular fusion"/>
    <property type="evidence" value="ECO:0000315"/>
    <property type="project" value="PomBase"/>
</dbReference>
<dbReference type="GO" id="GO:0010971">
    <property type="term" value="P:positive regulation of G2/M transition of mitotic cell cycle"/>
    <property type="evidence" value="ECO:0000315"/>
    <property type="project" value="PomBase"/>
</dbReference>
<dbReference type="GO" id="GO:0038203">
    <property type="term" value="P:TORC2 signaling"/>
    <property type="evidence" value="ECO:0000315"/>
    <property type="project" value="PomBase"/>
</dbReference>
<dbReference type="Gene3D" id="2.30.29.30">
    <property type="entry name" value="Pleckstrin-homology domain (PH domain)/Phosphotyrosine-binding domain (PTB)"/>
    <property type="match status" value="1"/>
</dbReference>
<dbReference type="InterPro" id="IPR031567">
    <property type="entry name" value="CRIM_dom"/>
</dbReference>
<dbReference type="InterPro" id="IPR011993">
    <property type="entry name" value="PH-like_dom_sf"/>
</dbReference>
<dbReference type="InterPro" id="IPR008828">
    <property type="entry name" value="Sin1/Avo1"/>
</dbReference>
<dbReference type="InterPro" id="IPR032679">
    <property type="entry name" value="Sin1_N"/>
</dbReference>
<dbReference type="InterPro" id="IPR031313">
    <property type="entry name" value="Sin1_PH_dom"/>
</dbReference>
<dbReference type="InterPro" id="IPR056385">
    <property type="entry name" value="UBL_AVO1/Sin1"/>
</dbReference>
<dbReference type="PANTHER" id="PTHR13335">
    <property type="entry name" value="TARGET OF RAPAMYCIN COMPLEX 2 SUBUNIT MAPKAP1"/>
    <property type="match status" value="1"/>
</dbReference>
<dbReference type="PANTHER" id="PTHR13335:SF1">
    <property type="entry name" value="TARGET OF RAPAMYCIN COMPLEX 2 SUBUNIT MAPKAP1"/>
    <property type="match status" value="1"/>
</dbReference>
<dbReference type="Pfam" id="PF16978">
    <property type="entry name" value="CRIM"/>
    <property type="match status" value="1"/>
</dbReference>
<dbReference type="Pfam" id="PF05422">
    <property type="entry name" value="SIN1"/>
    <property type="match status" value="1"/>
</dbReference>
<dbReference type="Pfam" id="PF16979">
    <property type="entry name" value="SIN1_PH"/>
    <property type="match status" value="1"/>
</dbReference>
<dbReference type="Pfam" id="PF23164">
    <property type="entry name" value="UBL_AVO1"/>
    <property type="match status" value="1"/>
</dbReference>
<gene>
    <name evidence="7 10" type="primary">sin1</name>
    <name evidence="10" type="ORF">SPAPYUG7.02c</name>
</gene>
<protein>
    <recommendedName>
        <fullName evidence="9">Target of rapamycin complex 2 subunit sin1</fullName>
        <shortName>TORC2 subunit sin1</shortName>
    </recommendedName>
    <alternativeName>
        <fullName evidence="7">Stress-activated map kinase-interacting protein 1</fullName>
        <shortName>SAPK-interacting protein 1</shortName>
    </alternativeName>
</protein>
<organism>
    <name type="scientific">Schizosaccharomyces pombe (strain 972 / ATCC 24843)</name>
    <name type="common">Fission yeast</name>
    <dbReference type="NCBI Taxonomy" id="284812"/>
    <lineage>
        <taxon>Eukaryota</taxon>
        <taxon>Fungi</taxon>
        <taxon>Dikarya</taxon>
        <taxon>Ascomycota</taxon>
        <taxon>Taphrinomycotina</taxon>
        <taxon>Schizosaccharomycetes</taxon>
        <taxon>Schizosaccharomycetales</taxon>
        <taxon>Schizosaccharomycetaceae</taxon>
        <taxon>Schizosaccharomyces</taxon>
    </lineage>
</organism>
<keyword id="KW-0002">3D-structure</keyword>
<keyword id="KW-0131">Cell cycle</keyword>
<keyword id="KW-0469">Meiosis</keyword>
<keyword id="KW-0597">Phosphoprotein</keyword>
<keyword id="KW-1185">Reference proteome</keyword>
<keyword id="KW-0346">Stress response</keyword>
<name>SIN1_SCHPO</name>
<feature type="chain" id="PRO_0000218770" description="Target of rapamycin complex 2 subunit sin1">
    <location>
        <begin position="1"/>
        <end position="665"/>
    </location>
</feature>
<feature type="domain" description="CRIM" evidence="1 6">
    <location>
        <begin position="255"/>
        <end position="392"/>
    </location>
</feature>
<feature type="domain" description="SIN1-type PH" evidence="1">
    <location>
        <begin position="558"/>
        <end position="659"/>
    </location>
</feature>
<feature type="region of interest" description="Disordered" evidence="2">
    <location>
        <begin position="65"/>
        <end position="112"/>
    </location>
</feature>
<feature type="region of interest" description="Disordered" evidence="2">
    <location>
        <begin position="395"/>
        <end position="433"/>
    </location>
</feature>
<feature type="region of interest" description="Disordered" evidence="2">
    <location>
        <begin position="517"/>
        <end position="537"/>
    </location>
</feature>
<feature type="compositionally biased region" description="Polar residues" evidence="2">
    <location>
        <begin position="65"/>
        <end position="83"/>
    </location>
</feature>
<feature type="compositionally biased region" description="Polar residues" evidence="2">
    <location>
        <begin position="100"/>
        <end position="109"/>
    </location>
</feature>
<feature type="compositionally biased region" description="Polar residues" evidence="2">
    <location>
        <begin position="522"/>
        <end position="536"/>
    </location>
</feature>
<feature type="modified residue" description="Phosphoserine" evidence="5">
    <location>
        <position position="62"/>
    </location>
</feature>
<feature type="modified residue" description="Phosphoserine" evidence="4">
    <location>
        <position position="133"/>
    </location>
</feature>
<feature type="modified residue" description="Phosphoserine" evidence="4">
    <location>
        <position position="404"/>
    </location>
</feature>
<feature type="modified residue" description="Phosphoserine" evidence="4">
    <location>
        <position position="490"/>
    </location>
</feature>
<feature type="modified residue" description="Phosphoserine" evidence="4">
    <location>
        <position position="502"/>
    </location>
</feature>
<feature type="modified residue" description="Phosphoserine" evidence="4">
    <location>
        <position position="530"/>
    </location>
</feature>
<feature type="mutagenesis site" description="Decreased ability to recognize and bind AGC protein kinase family members substrates." evidence="6">
    <original>I</original>
    <variation>T</variation>
    <location>
        <position position="294"/>
    </location>
</feature>
<feature type="mutagenesis site" description="Decreased ability to recognize and bind AGC protein kinase family members substrates. Abolished ability of the TORC2 complex to catalyze phosphorylation of gad8." evidence="6">
    <original>L</original>
    <variation>H</variation>
    <location>
        <position position="310"/>
    </location>
</feature>
<feature type="mutagenesis site" description="Decreased ability to recognize and bind AGC protein kinase family members substrates." evidence="6">
    <original>L</original>
    <variation>P</variation>
    <location>
        <position position="310"/>
    </location>
</feature>
<feature type="mutagenesis site" description="Decreased ability to recognize and bind AGC protein kinase family members substrates. Abolished ability of the TORC2 complex to catalyze phosphorylation of gad8." evidence="6">
    <original>A</original>
    <variation>D</variation>
    <location>
        <position position="319"/>
    </location>
</feature>
<feature type="mutagenesis site" description="Decreased ability to recognize and bind AGC protein kinase family members substrates. Abolished ability of the TORC2 complex to catalyze phosphorylation of gad8." evidence="6">
    <original>Y</original>
    <variation>D</variation>
    <location>
        <position position="327"/>
    </location>
</feature>
<feature type="mutagenesis site" description="Decreased ability to recognize and bind AGC protein kinase family members substrates." evidence="6">
    <original>Q</original>
    <variation>P</variation>
    <location>
        <position position="330"/>
    </location>
</feature>
<feature type="mutagenesis site" description="Decreased ability to recognize and bind AGC protein kinase family members substrates. Abolished ability of the TORC2 complex to catalyze phosphorylation of gad8." evidence="6">
    <original>L</original>
    <variation>S</variation>
    <location>
        <position position="348"/>
    </location>
</feature>
<feature type="mutagenesis site" description="Decreased ability to recognize and bind AGC protein kinase family members substrates." evidence="6">
    <original>G</original>
    <variation>E</variation>
    <location>
        <position position="355"/>
    </location>
</feature>
<feature type="mutagenesis site" description="Decreased ability to recognize and bind AGC protein kinase family members substrates. Abolished ability of the TORC2 complex to catalyze phosphorylation of gad8." evidence="6">
    <original>L</original>
    <variation>S</variation>
    <location>
        <position position="364"/>
    </location>
</feature>
<feature type="mutagenesis site" description="Decreased ability to recognize and bind AGC protein kinase family members substrates." evidence="6">
    <original>G</original>
    <variation>D</variation>
    <location>
        <position position="368"/>
    </location>
</feature>
<feature type="mutagenesis site" description="Decreased ability to recognize and bind AGC protein kinase family members substrates." evidence="6">
    <original>S</original>
    <variation>P</variation>
    <location>
        <position position="371"/>
    </location>
</feature>
<feature type="sequence conflict" description="In Ref. 1; AAD37449." evidence="8" ref="1">
    <original>A</original>
    <variation>R</variation>
    <location>
        <position position="152"/>
    </location>
</feature>
<feature type="strand" evidence="13">
    <location>
        <begin position="258"/>
        <end position="260"/>
    </location>
</feature>
<feature type="strand" evidence="14">
    <location>
        <begin position="265"/>
        <end position="267"/>
    </location>
</feature>
<feature type="turn" evidence="13">
    <location>
        <begin position="273"/>
        <end position="278"/>
    </location>
</feature>
<feature type="helix" evidence="13">
    <location>
        <begin position="279"/>
        <end position="281"/>
    </location>
</feature>
<feature type="turn" evidence="14">
    <location>
        <begin position="282"/>
        <end position="285"/>
    </location>
</feature>
<feature type="strand" evidence="13">
    <location>
        <begin position="290"/>
        <end position="292"/>
    </location>
</feature>
<feature type="strand" evidence="13">
    <location>
        <begin position="308"/>
        <end position="310"/>
    </location>
</feature>
<feature type="strand" evidence="13">
    <location>
        <begin position="312"/>
        <end position="314"/>
    </location>
</feature>
<feature type="helix" evidence="13">
    <location>
        <begin position="317"/>
        <end position="330"/>
    </location>
</feature>
<feature type="helix" evidence="13">
    <location>
        <begin position="338"/>
        <end position="340"/>
    </location>
</feature>
<feature type="turn" evidence="13">
    <location>
        <begin position="343"/>
        <end position="345"/>
    </location>
</feature>
<feature type="strand" evidence="13">
    <location>
        <begin position="346"/>
        <end position="351"/>
    </location>
</feature>
<feature type="strand" evidence="13">
    <location>
        <begin position="357"/>
        <end position="363"/>
    </location>
</feature>
<feature type="helix" evidence="13">
    <location>
        <begin position="371"/>
        <end position="373"/>
    </location>
</feature>
<feature type="strand" evidence="13">
    <location>
        <begin position="378"/>
        <end position="382"/>
    </location>
</feature>
<feature type="helix" evidence="13">
    <location>
        <begin position="385"/>
        <end position="394"/>
    </location>
</feature>
<sequence length="665" mass="74079">MELTREKVLLLTFLRMQYSHILPDSIENRVISTEAPEWELDKSLQDLLIHDYDYSKTSFSSSPPIVANDTVSNVRKPSDTKQVNGAGGQVNHSRAEDSDYATSDLSESSDVGDDDNSCIFSFSKVPMQKDVASIKEEERLDPKISTLNNIDAIANLKLTNMVESSQAVNLTSSKQSSINQQSSVSTDYDDLRSISEESFHLSQGEIPLTFPMNSSLTDTEADAVVAVDALFPGKQRGTHNTVNKARSVSNAKAPTSALRALLEHKENSSQNGPLAENFATFSGHAESNALRLNIYFPSSESPSKPLFVELRKNVLVSEAIGYILLQYVNQQLVPPIEDEAQNPNYWNLRIVEDDGELDEDFPALDRVGPLSKFGFDAFALVKATPAQIKENQAAYPFKSKHPTSIPEANNKTHIRHTSSTSSQSQKQAQDVKDTLNTSHVVQVRLPPYGDNARFCNIEISKTTRLAMVLNQVCWMKQLERFKYTLRVAGSDTVLPLDKTFSSLDGNPTLELVKKKVRDKKGSTQQLPTSSPQNSVYGSIKKDAQSSTYNATDIMSSNTYQEFLVWKRQPVSFMGRHERLLAIDGEYVHIMPSESKNIFETPKTSSIHAGSIILCKQSKKSPCNFKMIVSKNRETKRYDFEVLSALEAAIIVSRIRALMNTVKKIN</sequence>
<evidence type="ECO:0000255" key="1"/>
<evidence type="ECO:0000256" key="2">
    <source>
        <dbReference type="SAM" id="MobiDB-lite"/>
    </source>
</evidence>
<evidence type="ECO:0000269" key="3">
    <source>
    </source>
</evidence>
<evidence type="ECO:0000269" key="4">
    <source>
    </source>
</evidence>
<evidence type="ECO:0000269" key="5">
    <source>
    </source>
</evidence>
<evidence type="ECO:0000269" key="6">
    <source>
    </source>
</evidence>
<evidence type="ECO:0000303" key="7">
    <source>
    </source>
</evidence>
<evidence type="ECO:0000305" key="8"/>
<evidence type="ECO:0000305" key="9">
    <source>
    </source>
</evidence>
<evidence type="ECO:0000312" key="10">
    <source>
        <dbReference type="PomBase" id="SPAPYUG7.02c"/>
    </source>
</evidence>
<evidence type="ECO:0007744" key="11">
    <source>
        <dbReference type="PDB" id="2RUJ"/>
    </source>
</evidence>
<evidence type="ECO:0007744" key="12">
    <source>
        <dbReference type="PDB" id="2RVK"/>
    </source>
</evidence>
<evidence type="ECO:0007829" key="13">
    <source>
        <dbReference type="PDB" id="2RUJ"/>
    </source>
</evidence>
<evidence type="ECO:0007829" key="14">
    <source>
        <dbReference type="PDB" id="2RVK"/>
    </source>
</evidence>
<proteinExistence type="evidence at protein level"/>
<comment type="function">
    <text evidence="3 4 6">Component of the mechanistic target of rapamycin complex 2 (mTORC2), which regulates multiple cellular processes to control cell growth in response to environmental signals (PubMed:10428959, PubMed:18076573, PubMed:28264193). In response to signals, TORC2 phosphorylates AGC protein kinase family members, such as gad8 (PubMed:28264193). TORC2 is required for cell survival under various stress conditions (PubMed:10428959). TORC2 positively controls G1 cell-cycle arrest, sexual development and amino acid uptake (PubMed:10428959). Positively regulates amino acid uptake through the control of expression of amino acid permeases (PubMed:10428959). Within the mTORC2 complex, sin1 acts as a substrate adapter which recognizes and binds AGC protein kinase family members for phosphorylation by tor1 (PubMed:28264193).</text>
</comment>
<comment type="subunit">
    <text evidence="3 4 5 6">The target of rapamycin complex 2 (TORC2) is composed of at least bit61, pop3/wat1, sin1, ste20 and tor1 (PubMed:18076573, PubMed:18257517, PubMed:28264193). Interacts with the sty1 MAP kinase (PubMed:10428959).</text>
</comment>
<comment type="domain">
    <text evidence="6">The CRIM domain forms a ubiquitin-like fold with a characteristic acidic loop, which recognizes and binds AGC protein kinase family members substrates.</text>
</comment>
<comment type="PTM">
    <text evidence="3 4 5">Phosphorylated; under environmental stress. Either Ser-61 or Ser-62 and Ser-298, Ser-299 or Ser-301 are phosphorylated as well (PubMed:18076573).</text>
</comment>
<comment type="similarity">
    <text evidence="8">Belongs to the SIN1 family.</text>
</comment>
<comment type="sequence caution" evidence="8">
    <conflict type="erroneous initiation">
        <sequence resource="EMBL-CDS" id="AAD37449"/>
    </conflict>
</comment>
<reference key="1">
    <citation type="journal article" date="1999" name="EMBO J.">
        <title>Sin1: an evolutionarily conserved component of the eukaryotic SAPK pathway.</title>
        <authorList>
            <person name="Wilkinson M.G."/>
            <person name="Soto Pino T."/>
            <person name="Tournier S."/>
            <person name="Buck V."/>
            <person name="Martin H."/>
            <person name="Christiansen J."/>
            <person name="Wilkinson D.G."/>
            <person name="Millar J.B.A."/>
        </authorList>
    </citation>
    <scope>NUCLEOTIDE SEQUENCE [GENOMIC DNA]</scope>
    <scope>FUNCTION</scope>
    <scope>INTERACTION WITH STY1</scope>
    <scope>PHOSPHORYLATION</scope>
    <source>
        <strain>972 / ATCC 24843</strain>
    </source>
</reference>
<reference key="2">
    <citation type="journal article" date="2002" name="Nature">
        <title>The genome sequence of Schizosaccharomyces pombe.</title>
        <authorList>
            <person name="Wood V."/>
            <person name="Gwilliam R."/>
            <person name="Rajandream M.A."/>
            <person name="Lyne M.H."/>
            <person name="Lyne R."/>
            <person name="Stewart A."/>
            <person name="Sgouros J.G."/>
            <person name="Peat N."/>
            <person name="Hayles J."/>
            <person name="Baker S.G."/>
            <person name="Basham D."/>
            <person name="Bowman S."/>
            <person name="Brooks K."/>
            <person name="Brown D."/>
            <person name="Brown S."/>
            <person name="Chillingworth T."/>
            <person name="Churcher C.M."/>
            <person name="Collins M."/>
            <person name="Connor R."/>
            <person name="Cronin A."/>
            <person name="Davis P."/>
            <person name="Feltwell T."/>
            <person name="Fraser A."/>
            <person name="Gentles S."/>
            <person name="Goble A."/>
            <person name="Hamlin N."/>
            <person name="Harris D.E."/>
            <person name="Hidalgo J."/>
            <person name="Hodgson G."/>
            <person name="Holroyd S."/>
            <person name="Hornsby T."/>
            <person name="Howarth S."/>
            <person name="Huckle E.J."/>
            <person name="Hunt S."/>
            <person name="Jagels K."/>
            <person name="James K.D."/>
            <person name="Jones L."/>
            <person name="Jones M."/>
            <person name="Leather S."/>
            <person name="McDonald S."/>
            <person name="McLean J."/>
            <person name="Mooney P."/>
            <person name="Moule S."/>
            <person name="Mungall K.L."/>
            <person name="Murphy L.D."/>
            <person name="Niblett D."/>
            <person name="Odell C."/>
            <person name="Oliver K."/>
            <person name="O'Neil S."/>
            <person name="Pearson D."/>
            <person name="Quail M.A."/>
            <person name="Rabbinowitsch E."/>
            <person name="Rutherford K.M."/>
            <person name="Rutter S."/>
            <person name="Saunders D."/>
            <person name="Seeger K."/>
            <person name="Sharp S."/>
            <person name="Skelton J."/>
            <person name="Simmonds M.N."/>
            <person name="Squares R."/>
            <person name="Squares S."/>
            <person name="Stevens K."/>
            <person name="Taylor K."/>
            <person name="Taylor R.G."/>
            <person name="Tivey A."/>
            <person name="Walsh S.V."/>
            <person name="Warren T."/>
            <person name="Whitehead S."/>
            <person name="Woodward J.R."/>
            <person name="Volckaert G."/>
            <person name="Aert R."/>
            <person name="Robben J."/>
            <person name="Grymonprez B."/>
            <person name="Weltjens I."/>
            <person name="Vanstreels E."/>
            <person name="Rieger M."/>
            <person name="Schaefer M."/>
            <person name="Mueller-Auer S."/>
            <person name="Gabel C."/>
            <person name="Fuchs M."/>
            <person name="Duesterhoeft A."/>
            <person name="Fritzc C."/>
            <person name="Holzer E."/>
            <person name="Moestl D."/>
            <person name="Hilbert H."/>
            <person name="Borzym K."/>
            <person name="Langer I."/>
            <person name="Beck A."/>
            <person name="Lehrach H."/>
            <person name="Reinhardt R."/>
            <person name="Pohl T.M."/>
            <person name="Eger P."/>
            <person name="Zimmermann W."/>
            <person name="Wedler H."/>
            <person name="Wambutt R."/>
            <person name="Purnelle B."/>
            <person name="Goffeau A."/>
            <person name="Cadieu E."/>
            <person name="Dreano S."/>
            <person name="Gloux S."/>
            <person name="Lelaure V."/>
            <person name="Mottier S."/>
            <person name="Galibert F."/>
            <person name="Aves S.J."/>
            <person name="Xiang Z."/>
            <person name="Hunt C."/>
            <person name="Moore K."/>
            <person name="Hurst S.M."/>
            <person name="Lucas M."/>
            <person name="Rochet M."/>
            <person name="Gaillardin C."/>
            <person name="Tallada V.A."/>
            <person name="Garzon A."/>
            <person name="Thode G."/>
            <person name="Daga R.R."/>
            <person name="Cruzado L."/>
            <person name="Jimenez J."/>
            <person name="Sanchez M."/>
            <person name="del Rey F."/>
            <person name="Benito J."/>
            <person name="Dominguez A."/>
            <person name="Revuelta J.L."/>
            <person name="Moreno S."/>
            <person name="Armstrong J."/>
            <person name="Forsburg S.L."/>
            <person name="Cerutti L."/>
            <person name="Lowe T."/>
            <person name="McCombie W.R."/>
            <person name="Paulsen I."/>
            <person name="Potashkin J."/>
            <person name="Shpakovski G.V."/>
            <person name="Ussery D."/>
            <person name="Barrell B.G."/>
            <person name="Nurse P."/>
        </authorList>
    </citation>
    <scope>NUCLEOTIDE SEQUENCE [LARGE SCALE GENOMIC DNA]</scope>
    <source>
        <strain>972 / ATCC 24843</strain>
    </source>
</reference>
<reference key="3">
    <citation type="journal article" date="2007" name="Genes Cells">
        <title>Rapamycin sensitivity of the Schizosaccharomyces pombe tor2 mutant and organization of two highly phosphorylated TOR complexes by specific and common subunits.</title>
        <authorList>
            <person name="Hayashi T."/>
            <person name="Hatanaka M."/>
            <person name="Nagao K."/>
            <person name="Nakaseko Y."/>
            <person name="Kanoh J."/>
            <person name="Kokubu A."/>
            <person name="Ebe M."/>
            <person name="Yanagida M."/>
        </authorList>
    </citation>
    <scope>IDENTIFICATION IN THE TORC2 COMPLEX</scope>
    <scope>FUNCTION</scope>
    <scope>PHOSPHORYLATION AT SER-133; SER-404; SER-490; SER-502 AND SER-530</scope>
    <scope>IDENTIFICATION BY MASS SPECTROMETRY</scope>
</reference>
<reference key="4">
    <citation type="journal article" date="2007" name="Mol. Cell. Biol.">
        <title>Loss of the TOR kinase Tor2 mimics nitrogen starvation and activates the sexual development pathway in fission yeast.</title>
        <authorList>
            <person name="Matsuo T."/>
            <person name="Otsubo Y."/>
            <person name="Urano J."/>
            <person name="Tamanoi F."/>
            <person name="Yamamoto M."/>
        </authorList>
    </citation>
    <scope>INTERACTION WITH TOR1</scope>
</reference>
<reference key="5">
    <citation type="journal article" date="2008" name="J. Proteome Res.">
        <title>Phosphoproteome analysis of fission yeast.</title>
        <authorList>
            <person name="Wilson-Grady J.T."/>
            <person name="Villen J."/>
            <person name="Gygi S.P."/>
        </authorList>
    </citation>
    <scope>PHOSPHORYLATION [LARGE SCALE ANALYSIS] AT SER-62</scope>
    <scope>IDENTIFICATION BY MASS SPECTROMETRY</scope>
</reference>
<reference evidence="11" key="6">
    <citation type="journal article" date="2015" name="J. Biomol. NMR">
        <title>Utilization of paramagnetic relaxation enhancements for high-resolution NMR structure determination of a soluble loop-rich protein with sparse NOE distance restraints.</title>
        <authorList>
            <person name="Furuita K."/>
            <person name="Kataoka S."/>
            <person name="Sugiki T."/>
            <person name="Hattori Y."/>
            <person name="Kobayashi N."/>
            <person name="Ikegami T."/>
            <person name="Shiozaki K."/>
            <person name="Fujiwara T."/>
            <person name="Kojima C."/>
        </authorList>
    </citation>
    <scope>STRUCTURE BY NMR OF 247-400</scope>
</reference>
<reference evidence="12" key="7">
    <citation type="journal article" date="2017" name="Elife">
        <title>Substrate specificity of TOR complex 2 is determined by a ubiquitin-fold domain of the Sin1 subunit.</title>
        <authorList>
            <person name="Tatebe H."/>
            <person name="Murayama S."/>
            <person name="Yonekura T."/>
            <person name="Hatano T."/>
            <person name="Richter D."/>
            <person name="Furuya T."/>
            <person name="Kataoka S."/>
            <person name="Furuita K."/>
            <person name="Kojima C."/>
            <person name="Shiozaki K."/>
        </authorList>
    </citation>
    <scope>STRUCTURE BY NMR OF 247-400</scope>
    <scope>FUNCTION</scope>
    <scope>DOMAIN</scope>
    <scope>MUTAGENESIS OF ILE-294; LEU-310; ALA-319; TYR-327; GLN-330; LEU-348; GLY-355; LEU-364; GLY-368 AND SER-371</scope>
</reference>